<protein>
    <recommendedName>
        <fullName evidence="1">Ribosomal RNA small subunit methyltransferase H</fullName>
        <ecNumber evidence="1">2.1.1.199</ecNumber>
    </recommendedName>
    <alternativeName>
        <fullName evidence="1">16S rRNA m(4)C1402 methyltransferase</fullName>
    </alternativeName>
    <alternativeName>
        <fullName evidence="1">rRNA (cytosine-N(4)-)-methyltransferase RsmH</fullName>
    </alternativeName>
</protein>
<gene>
    <name evidence="1" type="primary">rsmH</name>
    <name type="synonym">mraW</name>
    <name type="ordered locus">SACE_5866</name>
</gene>
<reference key="1">
    <citation type="journal article" date="2007" name="Nat. Biotechnol.">
        <title>Complete genome sequence of the erythromycin-producing bacterium Saccharopolyspora erythraea NRRL23338.</title>
        <authorList>
            <person name="Oliynyk M."/>
            <person name="Samborskyy M."/>
            <person name="Lester J.B."/>
            <person name="Mironenko T."/>
            <person name="Scott N."/>
            <person name="Dickens S."/>
            <person name="Haydock S.F."/>
            <person name="Leadlay P.F."/>
        </authorList>
    </citation>
    <scope>NUCLEOTIDE SEQUENCE [LARGE SCALE GENOMIC DNA]</scope>
    <source>
        <strain>ATCC 11635 / DSM 40517 / JCM 4748 / NBRC 13426 / NCIMB 8594 / NRRL 2338</strain>
    </source>
</reference>
<feature type="chain" id="PRO_0000387093" description="Ribosomal RNA small subunit methyltransferase H">
    <location>
        <begin position="1"/>
        <end position="330"/>
    </location>
</feature>
<feature type="binding site" evidence="1">
    <location>
        <begin position="50"/>
        <end position="52"/>
    </location>
    <ligand>
        <name>S-adenosyl-L-methionine</name>
        <dbReference type="ChEBI" id="CHEBI:59789"/>
    </ligand>
</feature>
<feature type="binding site" evidence="1">
    <location>
        <position position="69"/>
    </location>
    <ligand>
        <name>S-adenosyl-L-methionine</name>
        <dbReference type="ChEBI" id="CHEBI:59789"/>
    </ligand>
</feature>
<feature type="binding site" evidence="1">
    <location>
        <position position="103"/>
    </location>
    <ligand>
        <name>S-adenosyl-L-methionine</name>
        <dbReference type="ChEBI" id="CHEBI:59789"/>
    </ligand>
</feature>
<feature type="binding site" evidence="1">
    <location>
        <position position="117"/>
    </location>
    <ligand>
        <name>S-adenosyl-L-methionine</name>
        <dbReference type="ChEBI" id="CHEBI:59789"/>
    </ligand>
</feature>
<feature type="binding site" evidence="1">
    <location>
        <position position="124"/>
    </location>
    <ligand>
        <name>S-adenosyl-L-methionine</name>
        <dbReference type="ChEBI" id="CHEBI:59789"/>
    </ligand>
</feature>
<name>RSMH_SACEN</name>
<sequence>MADEQQRRAQDGGSARDRHVPVMMERTLELLAPALSKGPAVVVDATLGMGGHSEALLAAHPELTLVGLDRDPDALRLAGERLAPHSDRVHLVHAVYDEWAEALAGLSLSKVDGALFDLGVSSLQLDETDRGFAYAHDAPLDMRMDSGAPRTAADVLNTYSAGELTRVLREYGEEKFAARIAAAIVRERAKAPFDRSGRLVELLYDAVPAASRRTGGHPAKRTFQALRIEVNAELEVLGRALPAALDSLAVGGRMVVMSYHSLEDRMVKRAFAERAKSKTPVDLPVELPGHGPEIRLLTRGAELASDAETAANPRAASVRLRAAERIKEAV</sequence>
<accession>A4FLX5</accession>
<proteinExistence type="inferred from homology"/>
<organism>
    <name type="scientific">Saccharopolyspora erythraea (strain ATCC 11635 / DSM 40517 / JCM 4748 / NBRC 13426 / NCIMB 8594 / NRRL 2338)</name>
    <dbReference type="NCBI Taxonomy" id="405948"/>
    <lineage>
        <taxon>Bacteria</taxon>
        <taxon>Bacillati</taxon>
        <taxon>Actinomycetota</taxon>
        <taxon>Actinomycetes</taxon>
        <taxon>Pseudonocardiales</taxon>
        <taxon>Pseudonocardiaceae</taxon>
        <taxon>Saccharopolyspora</taxon>
    </lineage>
</organism>
<evidence type="ECO:0000255" key="1">
    <source>
        <dbReference type="HAMAP-Rule" id="MF_01007"/>
    </source>
</evidence>
<comment type="function">
    <text evidence="1">Specifically methylates the N4 position of cytidine in position 1402 (C1402) of 16S rRNA.</text>
</comment>
<comment type="catalytic activity">
    <reaction evidence="1">
        <text>cytidine(1402) in 16S rRNA + S-adenosyl-L-methionine = N(4)-methylcytidine(1402) in 16S rRNA + S-adenosyl-L-homocysteine + H(+)</text>
        <dbReference type="Rhea" id="RHEA:42928"/>
        <dbReference type="Rhea" id="RHEA-COMP:10286"/>
        <dbReference type="Rhea" id="RHEA-COMP:10287"/>
        <dbReference type="ChEBI" id="CHEBI:15378"/>
        <dbReference type="ChEBI" id="CHEBI:57856"/>
        <dbReference type="ChEBI" id="CHEBI:59789"/>
        <dbReference type="ChEBI" id="CHEBI:74506"/>
        <dbReference type="ChEBI" id="CHEBI:82748"/>
        <dbReference type="EC" id="2.1.1.199"/>
    </reaction>
</comment>
<comment type="subcellular location">
    <subcellularLocation>
        <location evidence="1">Cytoplasm</location>
    </subcellularLocation>
</comment>
<comment type="similarity">
    <text evidence="1">Belongs to the methyltransferase superfamily. RsmH family.</text>
</comment>
<keyword id="KW-0963">Cytoplasm</keyword>
<keyword id="KW-0489">Methyltransferase</keyword>
<keyword id="KW-1185">Reference proteome</keyword>
<keyword id="KW-0698">rRNA processing</keyword>
<keyword id="KW-0949">S-adenosyl-L-methionine</keyword>
<keyword id="KW-0808">Transferase</keyword>
<dbReference type="EC" id="2.1.1.199" evidence="1"/>
<dbReference type="EMBL" id="AM420293">
    <property type="protein sequence ID" value="CAM05050.1"/>
    <property type="molecule type" value="Genomic_DNA"/>
</dbReference>
<dbReference type="RefSeq" id="WP_009943118.1">
    <property type="nucleotide sequence ID" value="NC_009142.1"/>
</dbReference>
<dbReference type="SMR" id="A4FLX5"/>
<dbReference type="STRING" id="405948.SACE_5866"/>
<dbReference type="KEGG" id="sen:SACE_5866"/>
<dbReference type="eggNOG" id="COG0275">
    <property type="taxonomic scope" value="Bacteria"/>
</dbReference>
<dbReference type="HOGENOM" id="CLU_038422_0_0_11"/>
<dbReference type="OrthoDB" id="9806637at2"/>
<dbReference type="Proteomes" id="UP000006728">
    <property type="component" value="Chromosome"/>
</dbReference>
<dbReference type="GO" id="GO:0005737">
    <property type="term" value="C:cytoplasm"/>
    <property type="evidence" value="ECO:0007669"/>
    <property type="project" value="UniProtKB-SubCell"/>
</dbReference>
<dbReference type="GO" id="GO:0071424">
    <property type="term" value="F:rRNA (cytosine-N4-)-methyltransferase activity"/>
    <property type="evidence" value="ECO:0007669"/>
    <property type="project" value="UniProtKB-UniRule"/>
</dbReference>
<dbReference type="GO" id="GO:0070475">
    <property type="term" value="P:rRNA base methylation"/>
    <property type="evidence" value="ECO:0007669"/>
    <property type="project" value="UniProtKB-UniRule"/>
</dbReference>
<dbReference type="FunFam" id="1.10.150.170:FF:000001">
    <property type="entry name" value="Ribosomal RNA small subunit methyltransferase H"/>
    <property type="match status" value="1"/>
</dbReference>
<dbReference type="Gene3D" id="1.10.150.170">
    <property type="entry name" value="Putative methyltransferase TM0872, insert domain"/>
    <property type="match status" value="1"/>
</dbReference>
<dbReference type="Gene3D" id="3.40.50.150">
    <property type="entry name" value="Vaccinia Virus protein VP39"/>
    <property type="match status" value="1"/>
</dbReference>
<dbReference type="HAMAP" id="MF_01007">
    <property type="entry name" value="16SrRNA_methyltr_H"/>
    <property type="match status" value="1"/>
</dbReference>
<dbReference type="InterPro" id="IPR002903">
    <property type="entry name" value="RsmH"/>
</dbReference>
<dbReference type="InterPro" id="IPR023397">
    <property type="entry name" value="SAM-dep_MeTrfase_MraW_recog"/>
</dbReference>
<dbReference type="InterPro" id="IPR029063">
    <property type="entry name" value="SAM-dependent_MTases_sf"/>
</dbReference>
<dbReference type="NCBIfam" id="TIGR00006">
    <property type="entry name" value="16S rRNA (cytosine(1402)-N(4))-methyltransferase RsmH"/>
    <property type="match status" value="1"/>
</dbReference>
<dbReference type="PANTHER" id="PTHR11265:SF0">
    <property type="entry name" value="12S RRNA N4-METHYLCYTIDINE METHYLTRANSFERASE"/>
    <property type="match status" value="1"/>
</dbReference>
<dbReference type="PANTHER" id="PTHR11265">
    <property type="entry name" value="S-ADENOSYL-METHYLTRANSFERASE MRAW"/>
    <property type="match status" value="1"/>
</dbReference>
<dbReference type="Pfam" id="PF01795">
    <property type="entry name" value="Methyltransf_5"/>
    <property type="match status" value="1"/>
</dbReference>
<dbReference type="PIRSF" id="PIRSF004486">
    <property type="entry name" value="MraW"/>
    <property type="match status" value="1"/>
</dbReference>
<dbReference type="SUPFAM" id="SSF81799">
    <property type="entry name" value="Putative methyltransferase TM0872, insert domain"/>
    <property type="match status" value="1"/>
</dbReference>
<dbReference type="SUPFAM" id="SSF53335">
    <property type="entry name" value="S-adenosyl-L-methionine-dependent methyltransferases"/>
    <property type="match status" value="1"/>
</dbReference>